<comment type="function">
    <text evidence="1">Inhibits the single-stranded annealing activity of UvsW, has no effect on UvsW helicase activity (PubMed:17092935).</text>
</comment>
<comment type="subunit">
    <text evidence="4">Probably interacts with UvsW (Probable) (PubMed:17092935).</text>
</comment>
<comment type="caution">
    <text evidence="1">Originally thought to be encoded as part of the preceding uvsW gene (PubMed:17092935).</text>
</comment>
<comment type="sequence caution" evidence="3">
    <conflict type="erroneous initiation">
        <sequence resource="EMBL-CDS" id="AAD42668"/>
    </conflict>
    <text>Extended N-terminus.</text>
</comment>
<sequence>MLLEFKQFLYEASIDEFMGKIASCQTLEGLEELEAYYKKRVKETELKDTDDISVRDALAGKRAELEDSDDEVEESF</sequence>
<keyword id="KW-0002">3D-structure</keyword>
<keyword id="KW-0426">Late protein</keyword>
<keyword id="KW-1185">Reference proteome</keyword>
<name>UVSW1_BPT4</name>
<accession>P0DXF2</accession>
<accession>P20703</accession>
<proteinExistence type="evidence at protein level"/>
<organismHost>
    <name type="scientific">Escherichia coli</name>
    <dbReference type="NCBI Taxonomy" id="562"/>
</organismHost>
<dbReference type="EMBL" id="AF158101">
    <property type="protein sequence ID" value="AAD42668.1"/>
    <property type="status" value="ALT_INIT"/>
    <property type="molecule type" value="Genomic_DNA"/>
</dbReference>
<dbReference type="PDB" id="2JPN">
    <property type="method" value="NMR"/>
    <property type="chains" value="A=1-76"/>
</dbReference>
<dbReference type="PDBsum" id="2JPN"/>
<dbReference type="SMR" id="P0DXF2"/>
<dbReference type="Proteomes" id="UP000009087">
    <property type="component" value="Segment"/>
</dbReference>
<dbReference type="Gene3D" id="1.20.1280.210">
    <property type="match status" value="1"/>
</dbReference>
<dbReference type="InterPro" id="IPR038341">
    <property type="entry name" value="UvsW.1-like_sf"/>
</dbReference>
<dbReference type="InterPro" id="IPR020975">
    <property type="entry name" value="UvsW.1_dom"/>
</dbReference>
<dbReference type="Pfam" id="PF11637">
    <property type="entry name" value="UvsW-1"/>
    <property type="match status" value="1"/>
</dbReference>
<reference key="1">
    <citation type="journal article" date="1997" name="EMBO J.">
        <title>Bacteriophage T4 UvsW protein is a helicase involved in recombination, repair and the regulation of DNA replication origins.</title>
        <authorList>
            <person name="Carles-Kinch K."/>
            <person name="George J.W."/>
            <person name="Kreuzer K.N."/>
        </authorList>
    </citation>
    <scope>NUCLEOTIDE SEQUENCE [GENOMIC DNA]</scope>
</reference>
<reference key="2">
    <citation type="journal article" date="2003" name="Microbiol. Mol. Biol. Rev.">
        <title>Bacteriophage T4 genome.</title>
        <authorList>
            <person name="Miller E.S."/>
            <person name="Kutter E."/>
            <person name="Mosig G."/>
            <person name="Arisaka F."/>
            <person name="Kunisawa T."/>
            <person name="Ruger W."/>
        </authorList>
    </citation>
    <scope>NUCLEOTIDE SEQUENCE [LARGE SCALE GENOMIC DNA]</scope>
</reference>
<reference key="3">
    <citation type="journal article" date="2007" name="J. Biol. Chem.">
        <title>The T4 phage UvsW protein contains both DNA unwinding and strand annealing activities.</title>
        <authorList>
            <person name="Nelson S.W."/>
            <person name="Benkovic S.J."/>
        </authorList>
    </citation>
    <scope>IDENTIFICATION</scope>
    <scope>FUNCTION</scope>
    <scope>SUBUNIT</scope>
    <scope>INTERACTION WITH UVSW</scope>
</reference>
<reference evidence="5" key="4">
    <citation type="journal article" date="2007" name="J. Biol. Chem.">
        <title>Crystallographic and NMR analyses of UvsW and UvsW.1 from bacteriophage T4.</title>
        <authorList>
            <person name="Kerr I.D."/>
            <person name="Sivakolundu S."/>
            <person name="Li Z."/>
            <person name="Buchsbaum J.C."/>
            <person name="Knox L.A."/>
            <person name="Kriwacki R."/>
            <person name="White S.W."/>
        </authorList>
    </citation>
    <scope>STRUCTURE BY NMR</scope>
</reference>
<evidence type="ECO:0000269" key="1">
    <source>
    </source>
</evidence>
<evidence type="ECO:0000303" key="2">
    <source>
    </source>
</evidence>
<evidence type="ECO:0000305" key="3"/>
<evidence type="ECO:0000305" key="4">
    <source>
    </source>
</evidence>
<evidence type="ECO:0007744" key="5">
    <source>
        <dbReference type="PDB" id="2JPN"/>
    </source>
</evidence>
<evidence type="ECO:0007829" key="6">
    <source>
        <dbReference type="PDB" id="2JPN"/>
    </source>
</evidence>
<gene>
    <name evidence="3" type="primary">uvsW1</name>
</gene>
<protein>
    <recommendedName>
        <fullName evidence="2">Protein UvsW.1</fullName>
    </recommendedName>
</protein>
<organism>
    <name type="scientific">Enterobacteria phage T4</name>
    <name type="common">Bacteriophage T4</name>
    <dbReference type="NCBI Taxonomy" id="10665"/>
    <lineage>
        <taxon>Viruses</taxon>
        <taxon>Duplodnaviria</taxon>
        <taxon>Heunggongvirae</taxon>
        <taxon>Uroviricota</taxon>
        <taxon>Caudoviricetes</taxon>
        <taxon>Straboviridae</taxon>
        <taxon>Tevenvirinae</taxon>
        <taxon>Tequatrovirus</taxon>
    </lineage>
</organism>
<feature type="chain" id="PRO_0000461190" description="Protein UvsW.1">
    <location>
        <begin position="1"/>
        <end position="76"/>
    </location>
</feature>
<feature type="strand" evidence="6">
    <location>
        <begin position="3"/>
        <end position="6"/>
    </location>
</feature>
<feature type="helix" evidence="6">
    <location>
        <begin position="7"/>
        <end position="12"/>
    </location>
</feature>
<feature type="helix" evidence="6">
    <location>
        <begin position="17"/>
        <end position="22"/>
    </location>
</feature>
<feature type="helix" evidence="6">
    <location>
        <begin position="27"/>
        <end position="40"/>
    </location>
</feature>
<feature type="turn" evidence="6">
    <location>
        <begin position="41"/>
        <end position="43"/>
    </location>
</feature>
<feature type="helix" evidence="6">
    <location>
        <begin position="49"/>
        <end position="67"/>
    </location>
</feature>
<feature type="turn" evidence="6">
    <location>
        <begin position="72"/>
        <end position="74"/>
    </location>
</feature>